<name>FUT13_ARATH</name>
<comment type="function">
    <text>May be involved in cell wall synthesis. Catalyzes alpha-1,4 glycosidic linkages and generates Lewis-a epitopes.</text>
</comment>
<comment type="pathway">
    <text>Protein modification; protein glycosylation.</text>
</comment>
<comment type="subcellular location">
    <subcellularLocation>
        <location evidence="1">Golgi apparatus</location>
        <location evidence="1">Golgi stack membrane</location>
        <topology evidence="1">Single-pass type II membrane protein</topology>
    </subcellularLocation>
    <text evidence="1">Membrane-bound form in trans cisternae of Golgi.</text>
</comment>
<comment type="tissue specificity">
    <text>Present in root, stem, flower buds and green siliques.</text>
</comment>
<comment type="similarity">
    <text evidence="3">Belongs to the glycosyltransferase 10 family.</text>
</comment>
<comment type="caution">
    <text evidence="3">It is uncertain whether Met-1 or Met-9 is the initiator.</text>
</comment>
<comment type="sequence caution" evidence="3">
    <conflict type="erroneous initiation">
        <sequence resource="EMBL-CDS" id="AAG52222"/>
    </conflict>
</comment>
<accession>Q9C8W3</accession>
<accession>Q8RYC1</accession>
<evidence type="ECO:0000250" key="1"/>
<evidence type="ECO:0000255" key="2"/>
<evidence type="ECO:0000305" key="3"/>
<gene>
    <name type="primary">FUT13</name>
    <name type="ordered locus">At1g71990</name>
    <name type="ORF">F17M19.14</name>
</gene>
<sequence>MPMRYLNAMAALLMMFFTLLILSFTGILEFPSASTSMEHSIDPEPKLSDSTSDPFSDVLVAYKKWDFEVGCARFRENHKDAILGNVSSGSLQEFGCGKLKMKHVKVLVKGWTWIPDNLENLYSCRCGMTCLWTKSSVLADSPDALLFETTTPPLQRRVGDPLRVYMELEAGRKRSGREDIFISYHAKDDVQTTYAGSLFHNNRNYHISPHKNNDVLVYWSSSRCLPHRDRLAKSLLDLIPHHSFGKCLNNVGGLDSALSMYPECVAEHNAEAKWYDHLHCAMSHYKFVLAIENTAVESYVTEKLFYALDSGSVPIYFGASNVQDFVPPHSVIDGSKFGSMQELAAYVKRLGDDPVAYSEYHAWRRCGLMGNYGKTRAVSLDTLPCRLCEEISRRGGKNAGV</sequence>
<reference key="1">
    <citation type="journal article" date="2001" name="Biochim. Biophys. Acta">
        <title>Cloning and expression of cDNAs encoding alpha1,3-fucosyltransferase homologues from Arabidopsis thaliana.</title>
        <authorList>
            <person name="Wilson I.B."/>
            <person name="Rendic D."/>
            <person name="Freilinger A."/>
            <person name="Dumic J."/>
            <person name="Altmann F."/>
            <person name="Mucha J."/>
            <person name="Muller S."/>
            <person name="Hauser M.T."/>
        </authorList>
    </citation>
    <scope>NUCLEOTIDE SEQUENCE [MRNA]</scope>
    <source>
        <strain>cv. Columbia</strain>
        <tissue>Root</tissue>
    </source>
</reference>
<reference key="2">
    <citation type="journal article" date="2000" name="Nature">
        <title>Sequence and analysis of chromosome 1 of the plant Arabidopsis thaliana.</title>
        <authorList>
            <person name="Theologis A."/>
            <person name="Ecker J.R."/>
            <person name="Palm C.J."/>
            <person name="Federspiel N.A."/>
            <person name="Kaul S."/>
            <person name="White O."/>
            <person name="Alonso J."/>
            <person name="Altafi H."/>
            <person name="Araujo R."/>
            <person name="Bowman C.L."/>
            <person name="Brooks S.Y."/>
            <person name="Buehler E."/>
            <person name="Chan A."/>
            <person name="Chao Q."/>
            <person name="Chen H."/>
            <person name="Cheuk R.F."/>
            <person name="Chin C.W."/>
            <person name="Chung M.K."/>
            <person name="Conn L."/>
            <person name="Conway A.B."/>
            <person name="Conway A.R."/>
            <person name="Creasy T.H."/>
            <person name="Dewar K."/>
            <person name="Dunn P."/>
            <person name="Etgu P."/>
            <person name="Feldblyum T.V."/>
            <person name="Feng J.-D."/>
            <person name="Fong B."/>
            <person name="Fujii C.Y."/>
            <person name="Gill J.E."/>
            <person name="Goldsmith A.D."/>
            <person name="Haas B."/>
            <person name="Hansen N.F."/>
            <person name="Hughes B."/>
            <person name="Huizar L."/>
            <person name="Hunter J.L."/>
            <person name="Jenkins J."/>
            <person name="Johnson-Hopson C."/>
            <person name="Khan S."/>
            <person name="Khaykin E."/>
            <person name="Kim C.J."/>
            <person name="Koo H.L."/>
            <person name="Kremenetskaia I."/>
            <person name="Kurtz D.B."/>
            <person name="Kwan A."/>
            <person name="Lam B."/>
            <person name="Langin-Hooper S."/>
            <person name="Lee A."/>
            <person name="Lee J.M."/>
            <person name="Lenz C.A."/>
            <person name="Li J.H."/>
            <person name="Li Y.-P."/>
            <person name="Lin X."/>
            <person name="Liu S.X."/>
            <person name="Liu Z.A."/>
            <person name="Luros J.S."/>
            <person name="Maiti R."/>
            <person name="Marziali A."/>
            <person name="Militscher J."/>
            <person name="Miranda M."/>
            <person name="Nguyen M."/>
            <person name="Nierman W.C."/>
            <person name="Osborne B.I."/>
            <person name="Pai G."/>
            <person name="Peterson J."/>
            <person name="Pham P.K."/>
            <person name="Rizzo M."/>
            <person name="Rooney T."/>
            <person name="Rowley D."/>
            <person name="Sakano H."/>
            <person name="Salzberg S.L."/>
            <person name="Schwartz J.R."/>
            <person name="Shinn P."/>
            <person name="Southwick A.M."/>
            <person name="Sun H."/>
            <person name="Tallon L.J."/>
            <person name="Tambunga G."/>
            <person name="Toriumi M.J."/>
            <person name="Town C.D."/>
            <person name="Utterback T."/>
            <person name="Van Aken S."/>
            <person name="Vaysberg M."/>
            <person name="Vysotskaia V.S."/>
            <person name="Walker M."/>
            <person name="Wu D."/>
            <person name="Yu G."/>
            <person name="Fraser C.M."/>
            <person name="Venter J.C."/>
            <person name="Davis R.W."/>
        </authorList>
    </citation>
    <scope>NUCLEOTIDE SEQUENCE [LARGE SCALE GENOMIC DNA]</scope>
    <source>
        <strain>cv. Columbia</strain>
    </source>
</reference>
<reference key="3">
    <citation type="journal article" date="2017" name="Plant J.">
        <title>Araport11: a complete reannotation of the Arabidopsis thaliana reference genome.</title>
        <authorList>
            <person name="Cheng C.Y."/>
            <person name="Krishnakumar V."/>
            <person name="Chan A.P."/>
            <person name="Thibaud-Nissen F."/>
            <person name="Schobel S."/>
            <person name="Town C.D."/>
        </authorList>
    </citation>
    <scope>GENOME REANNOTATION</scope>
    <source>
        <strain>cv. Columbia</strain>
    </source>
</reference>
<reference key="4">
    <citation type="journal article" date="2002" name="Glycobiology">
        <title>The presence of Lewis a epitopes in Arabidopsis thaliana glycoconjugates depends on an active alpha4-fucosyltransferase gene.</title>
        <authorList>
            <person name="Leonard R."/>
            <person name="Costa G."/>
            <person name="Darrambide E."/>
            <person name="Lhernould S."/>
            <person name="Fleurat-Lessard P."/>
            <person name="Carlue M."/>
            <person name="Gomord V."/>
            <person name="Faye L."/>
            <person name="Maftah A."/>
        </authorList>
    </citation>
    <scope>NUCLEOTIDE SEQUENCE [MRNA] OF 9-401</scope>
</reference>
<protein>
    <recommendedName>
        <fullName>Alpha-(1,4)-fucosyltransferase</fullName>
        <ecNumber>2.4.1.-</ecNumber>
    </recommendedName>
    <alternativeName>
        <fullName>FT4-M</fullName>
    </alternativeName>
    <alternativeName>
        <fullName>FucTC</fullName>
    </alternativeName>
    <alternativeName>
        <fullName>Fucosyltransferase 13</fullName>
        <shortName>AtFUT13</shortName>
    </alternativeName>
    <alternativeName>
        <fullName>Galactoside 3(4)-L-fucosyltransferase</fullName>
    </alternativeName>
</protein>
<keyword id="KW-0961">Cell wall biogenesis/degradation</keyword>
<keyword id="KW-0325">Glycoprotein</keyword>
<keyword id="KW-0328">Glycosyltransferase</keyword>
<keyword id="KW-0333">Golgi apparatus</keyword>
<keyword id="KW-0472">Membrane</keyword>
<keyword id="KW-1185">Reference proteome</keyword>
<keyword id="KW-0735">Signal-anchor</keyword>
<keyword id="KW-0808">Transferase</keyword>
<keyword id="KW-0812">Transmembrane</keyword>
<keyword id="KW-1133">Transmembrane helix</keyword>
<organism>
    <name type="scientific">Arabidopsis thaliana</name>
    <name type="common">Mouse-ear cress</name>
    <dbReference type="NCBI Taxonomy" id="3702"/>
    <lineage>
        <taxon>Eukaryota</taxon>
        <taxon>Viridiplantae</taxon>
        <taxon>Streptophyta</taxon>
        <taxon>Embryophyta</taxon>
        <taxon>Tracheophyta</taxon>
        <taxon>Spermatophyta</taxon>
        <taxon>Magnoliopsida</taxon>
        <taxon>eudicotyledons</taxon>
        <taxon>Gunneridae</taxon>
        <taxon>Pentapetalae</taxon>
        <taxon>rosids</taxon>
        <taxon>malvids</taxon>
        <taxon>Brassicales</taxon>
        <taxon>Brassicaceae</taxon>
        <taxon>Camelineae</taxon>
        <taxon>Arabidopsis</taxon>
    </lineage>
</organism>
<proteinExistence type="evidence at transcript level"/>
<feature type="chain" id="PRO_0000221126" description="Alpha-(1,4)-fucosyltransferase">
    <location>
        <begin position="1"/>
        <end position="401"/>
    </location>
</feature>
<feature type="topological domain" description="Cytoplasmic" evidence="2">
    <location>
        <begin position="1"/>
        <end position="4"/>
    </location>
</feature>
<feature type="transmembrane region" description="Helical; Signal-anchor for type II membrane protein" evidence="2">
    <location>
        <begin position="5"/>
        <end position="27"/>
    </location>
</feature>
<feature type="topological domain" description="Lumenal" evidence="2">
    <location>
        <begin position="28"/>
        <end position="401"/>
    </location>
</feature>
<feature type="glycosylation site" description="N-linked (GlcNAc...) asparagine" evidence="2">
    <location>
        <position position="85"/>
    </location>
</feature>
<dbReference type="EC" id="2.4.1.-"/>
<dbReference type="EMBL" id="AJ404862">
    <property type="protein sequence ID" value="CAC38049.1"/>
    <property type="molecule type" value="mRNA"/>
</dbReference>
<dbReference type="EMBL" id="AC021665">
    <property type="protein sequence ID" value="AAG52222.1"/>
    <property type="status" value="ALT_INIT"/>
    <property type="molecule type" value="Genomic_DNA"/>
</dbReference>
<dbReference type="EMBL" id="CP002684">
    <property type="protein sequence ID" value="AEE35261.1"/>
    <property type="molecule type" value="Genomic_DNA"/>
</dbReference>
<dbReference type="EMBL" id="AY026941">
    <property type="protein sequence ID" value="AAK11728.1"/>
    <property type="molecule type" value="mRNA"/>
</dbReference>
<dbReference type="PIR" id="H96742">
    <property type="entry name" value="H96742"/>
</dbReference>
<dbReference type="RefSeq" id="NP_177344.2">
    <property type="nucleotide sequence ID" value="NM_105857.4"/>
</dbReference>
<dbReference type="SMR" id="Q9C8W3"/>
<dbReference type="BioGRID" id="28750">
    <property type="interactions" value="1"/>
</dbReference>
<dbReference type="FunCoup" id="Q9C8W3">
    <property type="interactions" value="88"/>
</dbReference>
<dbReference type="IntAct" id="Q9C8W3">
    <property type="interactions" value="1"/>
</dbReference>
<dbReference type="STRING" id="3702.Q9C8W3"/>
<dbReference type="CAZy" id="GT10">
    <property type="family name" value="Glycosyltransferase Family 10"/>
</dbReference>
<dbReference type="GlyCosmos" id="Q9C8W3">
    <property type="glycosylation" value="1 site, No reported glycans"/>
</dbReference>
<dbReference type="GlyGen" id="Q9C8W3">
    <property type="glycosylation" value="1 site"/>
</dbReference>
<dbReference type="PaxDb" id="3702-AT1G71990.1"/>
<dbReference type="ProteomicsDB" id="230538"/>
<dbReference type="EnsemblPlants" id="AT1G71990.1">
    <property type="protein sequence ID" value="AT1G71990.1"/>
    <property type="gene ID" value="AT1G71990"/>
</dbReference>
<dbReference type="GeneID" id="843530"/>
<dbReference type="Gramene" id="AT1G71990.1">
    <property type="protein sequence ID" value="AT1G71990.1"/>
    <property type="gene ID" value="AT1G71990"/>
</dbReference>
<dbReference type="KEGG" id="ath:AT1G71990"/>
<dbReference type="Araport" id="AT1G71990"/>
<dbReference type="TAIR" id="AT1G71990">
    <property type="gene designation" value="FUT13"/>
</dbReference>
<dbReference type="eggNOG" id="KOG2619">
    <property type="taxonomic scope" value="Eukaryota"/>
</dbReference>
<dbReference type="HOGENOM" id="CLU_062112_0_0_1"/>
<dbReference type="InParanoid" id="Q9C8W3"/>
<dbReference type="OMA" id="FRKWDSQ"/>
<dbReference type="PhylomeDB" id="Q9C8W3"/>
<dbReference type="BioCyc" id="MetaCyc:GQT-3947-MONOMER"/>
<dbReference type="BRENDA" id="2.4.1.214">
    <property type="organism ID" value="399"/>
</dbReference>
<dbReference type="UniPathway" id="UPA00378"/>
<dbReference type="PRO" id="PR:Q9C8W3"/>
<dbReference type="Proteomes" id="UP000006548">
    <property type="component" value="Chromosome 1"/>
</dbReference>
<dbReference type="ExpressionAtlas" id="Q9C8W3">
    <property type="expression patterns" value="baseline and differential"/>
</dbReference>
<dbReference type="GO" id="GO:0032580">
    <property type="term" value="C:Golgi cisterna membrane"/>
    <property type="evidence" value="ECO:0007669"/>
    <property type="project" value="UniProtKB-SubCell"/>
</dbReference>
<dbReference type="GO" id="GO:0000138">
    <property type="term" value="C:Golgi trans cisterna"/>
    <property type="evidence" value="ECO:0007005"/>
    <property type="project" value="TAIR"/>
</dbReference>
<dbReference type="GO" id="GO:0008417">
    <property type="term" value="F:fucosyltransferase activity"/>
    <property type="evidence" value="ECO:0000250"/>
    <property type="project" value="TAIR"/>
</dbReference>
<dbReference type="GO" id="GO:0071555">
    <property type="term" value="P:cell wall organization"/>
    <property type="evidence" value="ECO:0007669"/>
    <property type="project" value="UniProtKB-KW"/>
</dbReference>
<dbReference type="GO" id="GO:0010493">
    <property type="term" value="P:Lewis a epitope biosynthetic process"/>
    <property type="evidence" value="ECO:0000314"/>
    <property type="project" value="TAIR"/>
</dbReference>
<dbReference type="GO" id="GO:0006486">
    <property type="term" value="P:protein glycosylation"/>
    <property type="evidence" value="ECO:0007669"/>
    <property type="project" value="UniProtKB-UniPathway"/>
</dbReference>
<dbReference type="FunFam" id="3.40.50.11660:FF:000003">
    <property type="entry name" value="Alpha-(1,4)-fucosyltransferase"/>
    <property type="match status" value="1"/>
</dbReference>
<dbReference type="Gene3D" id="3.40.50.11660">
    <property type="entry name" value="Glycosyl transferase family 10, C-terminal domain"/>
    <property type="match status" value="1"/>
</dbReference>
<dbReference type="InterPro" id="IPR017177">
    <property type="entry name" value="Alpha-1_3/4-FUT_pln"/>
</dbReference>
<dbReference type="InterPro" id="IPR055270">
    <property type="entry name" value="Glyco_tran_10_C"/>
</dbReference>
<dbReference type="InterPro" id="IPR001503">
    <property type="entry name" value="Glyco_trans_10"/>
</dbReference>
<dbReference type="InterPro" id="IPR038577">
    <property type="entry name" value="GT10-like_C_sf"/>
</dbReference>
<dbReference type="PANTHER" id="PTHR11929">
    <property type="entry name" value="ALPHA- 1,3 -FUCOSYLTRANSFERASE"/>
    <property type="match status" value="1"/>
</dbReference>
<dbReference type="PANTHER" id="PTHR11929:SF194">
    <property type="entry name" value="ALPHA-(1,3)-FUCOSYLTRANSFERASE 10"/>
    <property type="match status" value="1"/>
</dbReference>
<dbReference type="Pfam" id="PF00852">
    <property type="entry name" value="Glyco_transf_10"/>
    <property type="match status" value="1"/>
</dbReference>
<dbReference type="PIRSF" id="PIRSF037334">
    <property type="entry name" value="Alpha1_3/4FUT_pln"/>
    <property type="match status" value="1"/>
</dbReference>
<dbReference type="SUPFAM" id="SSF53756">
    <property type="entry name" value="UDP-Glycosyltransferase/glycogen phosphorylase"/>
    <property type="match status" value="1"/>
</dbReference>